<reference key="1">
    <citation type="journal article" date="2000" name="Science">
        <title>The genome sequence of Drosophila melanogaster.</title>
        <authorList>
            <person name="Adams M.D."/>
            <person name="Celniker S.E."/>
            <person name="Holt R.A."/>
            <person name="Evans C.A."/>
            <person name="Gocayne J.D."/>
            <person name="Amanatides P.G."/>
            <person name="Scherer S.E."/>
            <person name="Li P.W."/>
            <person name="Hoskins R.A."/>
            <person name="Galle R.F."/>
            <person name="George R.A."/>
            <person name="Lewis S.E."/>
            <person name="Richards S."/>
            <person name="Ashburner M."/>
            <person name="Henderson S.N."/>
            <person name="Sutton G.G."/>
            <person name="Wortman J.R."/>
            <person name="Yandell M.D."/>
            <person name="Zhang Q."/>
            <person name="Chen L.X."/>
            <person name="Brandon R.C."/>
            <person name="Rogers Y.-H.C."/>
            <person name="Blazej R.G."/>
            <person name="Champe M."/>
            <person name="Pfeiffer B.D."/>
            <person name="Wan K.H."/>
            <person name="Doyle C."/>
            <person name="Baxter E.G."/>
            <person name="Helt G."/>
            <person name="Nelson C.R."/>
            <person name="Miklos G.L.G."/>
            <person name="Abril J.F."/>
            <person name="Agbayani A."/>
            <person name="An H.-J."/>
            <person name="Andrews-Pfannkoch C."/>
            <person name="Baldwin D."/>
            <person name="Ballew R.M."/>
            <person name="Basu A."/>
            <person name="Baxendale J."/>
            <person name="Bayraktaroglu L."/>
            <person name="Beasley E.M."/>
            <person name="Beeson K.Y."/>
            <person name="Benos P.V."/>
            <person name="Berman B.P."/>
            <person name="Bhandari D."/>
            <person name="Bolshakov S."/>
            <person name="Borkova D."/>
            <person name="Botchan M.R."/>
            <person name="Bouck J."/>
            <person name="Brokstein P."/>
            <person name="Brottier P."/>
            <person name="Burtis K.C."/>
            <person name="Busam D.A."/>
            <person name="Butler H."/>
            <person name="Cadieu E."/>
            <person name="Center A."/>
            <person name="Chandra I."/>
            <person name="Cherry J.M."/>
            <person name="Cawley S."/>
            <person name="Dahlke C."/>
            <person name="Davenport L.B."/>
            <person name="Davies P."/>
            <person name="de Pablos B."/>
            <person name="Delcher A."/>
            <person name="Deng Z."/>
            <person name="Mays A.D."/>
            <person name="Dew I."/>
            <person name="Dietz S.M."/>
            <person name="Dodson K."/>
            <person name="Doup L.E."/>
            <person name="Downes M."/>
            <person name="Dugan-Rocha S."/>
            <person name="Dunkov B.C."/>
            <person name="Dunn P."/>
            <person name="Durbin K.J."/>
            <person name="Evangelista C.C."/>
            <person name="Ferraz C."/>
            <person name="Ferriera S."/>
            <person name="Fleischmann W."/>
            <person name="Fosler C."/>
            <person name="Gabrielian A.E."/>
            <person name="Garg N.S."/>
            <person name="Gelbart W.M."/>
            <person name="Glasser K."/>
            <person name="Glodek A."/>
            <person name="Gong F."/>
            <person name="Gorrell J.H."/>
            <person name="Gu Z."/>
            <person name="Guan P."/>
            <person name="Harris M."/>
            <person name="Harris N.L."/>
            <person name="Harvey D.A."/>
            <person name="Heiman T.J."/>
            <person name="Hernandez J.R."/>
            <person name="Houck J."/>
            <person name="Hostin D."/>
            <person name="Houston K.A."/>
            <person name="Howland T.J."/>
            <person name="Wei M.-H."/>
            <person name="Ibegwam C."/>
            <person name="Jalali M."/>
            <person name="Kalush F."/>
            <person name="Karpen G.H."/>
            <person name="Ke Z."/>
            <person name="Kennison J.A."/>
            <person name="Ketchum K.A."/>
            <person name="Kimmel B.E."/>
            <person name="Kodira C.D."/>
            <person name="Kraft C.L."/>
            <person name="Kravitz S."/>
            <person name="Kulp D."/>
            <person name="Lai Z."/>
            <person name="Lasko P."/>
            <person name="Lei Y."/>
            <person name="Levitsky A.A."/>
            <person name="Li J.H."/>
            <person name="Li Z."/>
            <person name="Liang Y."/>
            <person name="Lin X."/>
            <person name="Liu X."/>
            <person name="Mattei B."/>
            <person name="McIntosh T.C."/>
            <person name="McLeod M.P."/>
            <person name="McPherson D."/>
            <person name="Merkulov G."/>
            <person name="Milshina N.V."/>
            <person name="Mobarry C."/>
            <person name="Morris J."/>
            <person name="Moshrefi A."/>
            <person name="Mount S.M."/>
            <person name="Moy M."/>
            <person name="Murphy B."/>
            <person name="Murphy L."/>
            <person name="Muzny D.M."/>
            <person name="Nelson D.L."/>
            <person name="Nelson D.R."/>
            <person name="Nelson K.A."/>
            <person name="Nixon K."/>
            <person name="Nusskern D.R."/>
            <person name="Pacleb J.M."/>
            <person name="Palazzolo M."/>
            <person name="Pittman G.S."/>
            <person name="Pan S."/>
            <person name="Pollard J."/>
            <person name="Puri V."/>
            <person name="Reese M.G."/>
            <person name="Reinert K."/>
            <person name="Remington K."/>
            <person name="Saunders R.D.C."/>
            <person name="Scheeler F."/>
            <person name="Shen H."/>
            <person name="Shue B.C."/>
            <person name="Siden-Kiamos I."/>
            <person name="Simpson M."/>
            <person name="Skupski M.P."/>
            <person name="Smith T.J."/>
            <person name="Spier E."/>
            <person name="Spradling A.C."/>
            <person name="Stapleton M."/>
            <person name="Strong R."/>
            <person name="Sun E."/>
            <person name="Svirskas R."/>
            <person name="Tector C."/>
            <person name="Turner R."/>
            <person name="Venter E."/>
            <person name="Wang A.H."/>
            <person name="Wang X."/>
            <person name="Wang Z.-Y."/>
            <person name="Wassarman D.A."/>
            <person name="Weinstock G.M."/>
            <person name="Weissenbach J."/>
            <person name="Williams S.M."/>
            <person name="Woodage T."/>
            <person name="Worley K.C."/>
            <person name="Wu D."/>
            <person name="Yang S."/>
            <person name="Yao Q.A."/>
            <person name="Ye J."/>
            <person name="Yeh R.-F."/>
            <person name="Zaveri J.S."/>
            <person name="Zhan M."/>
            <person name="Zhang G."/>
            <person name="Zhao Q."/>
            <person name="Zheng L."/>
            <person name="Zheng X.H."/>
            <person name="Zhong F.N."/>
            <person name="Zhong W."/>
            <person name="Zhou X."/>
            <person name="Zhu S.C."/>
            <person name="Zhu X."/>
            <person name="Smith H.O."/>
            <person name="Gibbs R.A."/>
            <person name="Myers E.W."/>
            <person name="Rubin G.M."/>
            <person name="Venter J.C."/>
        </authorList>
    </citation>
    <scope>NUCLEOTIDE SEQUENCE [LARGE SCALE GENOMIC DNA]</scope>
    <source>
        <strain>Berkeley</strain>
    </source>
</reference>
<reference key="2">
    <citation type="journal article" date="2002" name="Genome Biol.">
        <title>Annotation of the Drosophila melanogaster euchromatic genome: a systematic review.</title>
        <authorList>
            <person name="Misra S."/>
            <person name="Crosby M.A."/>
            <person name="Mungall C.J."/>
            <person name="Matthews B.B."/>
            <person name="Campbell K.S."/>
            <person name="Hradecky P."/>
            <person name="Huang Y."/>
            <person name="Kaminker J.S."/>
            <person name="Millburn G.H."/>
            <person name="Prochnik S.E."/>
            <person name="Smith C.D."/>
            <person name="Tupy J.L."/>
            <person name="Whitfield E.J."/>
            <person name="Bayraktaroglu L."/>
            <person name="Berman B.P."/>
            <person name="Bettencourt B.R."/>
            <person name="Celniker S.E."/>
            <person name="de Grey A.D.N.J."/>
            <person name="Drysdale R.A."/>
            <person name="Harris N.L."/>
            <person name="Richter J."/>
            <person name="Russo S."/>
            <person name="Schroeder A.J."/>
            <person name="Shu S.Q."/>
            <person name="Stapleton M."/>
            <person name="Yamada C."/>
            <person name="Ashburner M."/>
            <person name="Gelbart W.M."/>
            <person name="Rubin G.M."/>
            <person name="Lewis S.E."/>
        </authorList>
    </citation>
    <scope>GENOME REANNOTATION</scope>
    <scope>ALTERNATIVE SPLICING</scope>
    <source>
        <strain>Berkeley</strain>
    </source>
</reference>
<reference key="3">
    <citation type="journal article" date="2002" name="Genome Biol.">
        <title>A Drosophila full-length cDNA resource.</title>
        <authorList>
            <person name="Stapleton M."/>
            <person name="Carlson J.W."/>
            <person name="Brokstein P."/>
            <person name="Yu C."/>
            <person name="Champe M."/>
            <person name="George R.A."/>
            <person name="Guarin H."/>
            <person name="Kronmiller B."/>
            <person name="Pacleb J.M."/>
            <person name="Park S."/>
            <person name="Wan K.H."/>
            <person name="Rubin G.M."/>
            <person name="Celniker S.E."/>
        </authorList>
    </citation>
    <scope>NUCLEOTIDE SEQUENCE [LARGE SCALE MRNA] OF 148-1247 (ISOFORM A)</scope>
    <source>
        <strain>Berkeley</strain>
        <tissue>Head</tissue>
    </source>
</reference>
<reference key="4">
    <citation type="journal article" date="2008" name="J. Proteome Res.">
        <title>Phosphoproteome analysis of Drosophila melanogaster embryos.</title>
        <authorList>
            <person name="Zhai B."/>
            <person name="Villen J."/>
            <person name="Beausoleil S.A."/>
            <person name="Mintseris J."/>
            <person name="Gygi S.P."/>
        </authorList>
    </citation>
    <scope>PHOSPHORYLATION [LARGE SCALE ANALYSIS] AT SER-1030 AND SER-1033</scope>
    <scope>IDENTIFICATION BY MASS SPECTROMETRY</scope>
    <source>
        <tissue>Embryo</tissue>
    </source>
</reference>
<dbReference type="EMBL" id="AE014298">
    <property type="protein sequence ID" value="AAO41642.2"/>
    <property type="molecule type" value="Genomic_DNA"/>
</dbReference>
<dbReference type="EMBL" id="AE014298">
    <property type="protein sequence ID" value="AAF46443.4"/>
    <property type="molecule type" value="Genomic_DNA"/>
</dbReference>
<dbReference type="EMBL" id="AY058417">
    <property type="protein sequence ID" value="AAL13646.1"/>
    <property type="molecule type" value="mRNA"/>
</dbReference>
<dbReference type="RefSeq" id="NP_572525.3">
    <molecule id="Q9W391-1"/>
    <property type="nucleotide sequence ID" value="NM_132297.6"/>
</dbReference>
<dbReference type="RefSeq" id="NP_788889.2">
    <molecule id="Q9W391-2"/>
    <property type="nucleotide sequence ID" value="NM_176716.4"/>
</dbReference>
<dbReference type="SMR" id="Q9W391"/>
<dbReference type="BioGRID" id="58294">
    <property type="interactions" value="11"/>
</dbReference>
<dbReference type="FunCoup" id="Q9W391">
    <property type="interactions" value="181"/>
</dbReference>
<dbReference type="IntAct" id="Q9W391">
    <property type="interactions" value="10"/>
</dbReference>
<dbReference type="STRING" id="7227.FBpp0301190"/>
<dbReference type="GlyGen" id="Q9W391">
    <property type="glycosylation" value="1 site"/>
</dbReference>
<dbReference type="iPTMnet" id="Q9W391"/>
<dbReference type="DNASU" id="31839"/>
<dbReference type="EnsemblMetazoa" id="FBtr0071351">
    <molecule id="Q9W391-1"/>
    <property type="protein sequence ID" value="FBpp0071286"/>
    <property type="gene ID" value="FBgn0030087"/>
</dbReference>
<dbReference type="EnsemblMetazoa" id="FBtr0071352">
    <molecule id="Q9W391-2"/>
    <property type="protein sequence ID" value="FBpp0071287"/>
    <property type="gene ID" value="FBgn0030087"/>
</dbReference>
<dbReference type="GeneID" id="31839"/>
<dbReference type="KEGG" id="dme:Dmel_CG7766"/>
<dbReference type="UCSC" id="CG7766-RA">
    <molecule id="Q9W391-1"/>
    <property type="organism name" value="d. melanogaster"/>
</dbReference>
<dbReference type="AGR" id="FB:FBgn0030087"/>
<dbReference type="FlyBase" id="FBgn0030087">
    <property type="gene designation" value="CG7766"/>
</dbReference>
<dbReference type="VEuPathDB" id="VectorBase:FBgn0030087"/>
<dbReference type="eggNOG" id="KOG3635">
    <property type="taxonomic scope" value="Eukaryota"/>
</dbReference>
<dbReference type="GeneTree" id="ENSGT00950000183118"/>
<dbReference type="InParanoid" id="Q9W391"/>
<dbReference type="OrthoDB" id="5971574at2759"/>
<dbReference type="PhylomeDB" id="Q9W391"/>
<dbReference type="Reactome" id="R-DME-70221">
    <property type="pathway name" value="Glycogen breakdown (glycogenolysis)"/>
</dbReference>
<dbReference type="UniPathway" id="UPA00163"/>
<dbReference type="BioGRID-ORCS" id="31839">
    <property type="hits" value="0 hits in 3 CRISPR screens"/>
</dbReference>
<dbReference type="ChiTaRS" id="CG7766">
    <property type="organism name" value="fly"/>
</dbReference>
<dbReference type="GenomeRNAi" id="31839"/>
<dbReference type="PRO" id="PR:Q9W391"/>
<dbReference type="Proteomes" id="UP000000803">
    <property type="component" value="Chromosome X"/>
</dbReference>
<dbReference type="Bgee" id="FBgn0030087">
    <property type="expression patterns" value="Expressed in indirect flight muscle cell (Drosophila) in body wall and 233 other cell types or tissues"/>
</dbReference>
<dbReference type="ExpressionAtlas" id="Q9W391">
    <property type="expression patterns" value="baseline and differential"/>
</dbReference>
<dbReference type="GO" id="GO:0005886">
    <property type="term" value="C:plasma membrane"/>
    <property type="evidence" value="ECO:0007669"/>
    <property type="project" value="UniProtKB-SubCell"/>
</dbReference>
<dbReference type="GO" id="GO:0005516">
    <property type="term" value="F:calmodulin binding"/>
    <property type="evidence" value="ECO:0007669"/>
    <property type="project" value="UniProtKB-KW"/>
</dbReference>
<dbReference type="GO" id="GO:0005977">
    <property type="term" value="P:glycogen metabolic process"/>
    <property type="evidence" value="ECO:0007669"/>
    <property type="project" value="UniProtKB-UniPathway"/>
</dbReference>
<dbReference type="GO" id="GO:0045819">
    <property type="term" value="P:positive regulation of glycogen catabolic process"/>
    <property type="evidence" value="ECO:0000250"/>
    <property type="project" value="FlyBase"/>
</dbReference>
<dbReference type="FunFam" id="1.50.10.10:FF:000004">
    <property type="entry name" value="Phosphorylase b kinase regulatory subunit"/>
    <property type="match status" value="1"/>
</dbReference>
<dbReference type="Gene3D" id="1.50.10.10">
    <property type="match status" value="1"/>
</dbReference>
<dbReference type="InterPro" id="IPR008928">
    <property type="entry name" value="6-hairpin_glycosidase_sf"/>
</dbReference>
<dbReference type="InterPro" id="IPR012341">
    <property type="entry name" value="6hp_glycosidase-like_sf"/>
</dbReference>
<dbReference type="InterPro" id="IPR011613">
    <property type="entry name" value="GH15-like"/>
</dbReference>
<dbReference type="InterPro" id="IPR045583">
    <property type="entry name" value="KPBA/B_C"/>
</dbReference>
<dbReference type="InterPro" id="IPR008734">
    <property type="entry name" value="PHK_A/B_su"/>
</dbReference>
<dbReference type="PANTHER" id="PTHR10749">
    <property type="entry name" value="PHOSPHORYLASE B KINASE REGULATORY SUBUNIT"/>
    <property type="match status" value="1"/>
</dbReference>
<dbReference type="PANTHER" id="PTHR10749:SF7">
    <property type="entry name" value="PHOSPHORYLASE B KINASE REGULATORY SUBUNIT ALPHA-RELATED"/>
    <property type="match status" value="1"/>
</dbReference>
<dbReference type="Pfam" id="PF00723">
    <property type="entry name" value="Glyco_hydro_15"/>
    <property type="match status" value="1"/>
</dbReference>
<dbReference type="Pfam" id="PF19292">
    <property type="entry name" value="KPBB_C"/>
    <property type="match status" value="1"/>
</dbReference>
<dbReference type="SUPFAM" id="SSF48208">
    <property type="entry name" value="Six-hairpin glycosidases"/>
    <property type="match status" value="1"/>
</dbReference>
<organism>
    <name type="scientific">Drosophila melanogaster</name>
    <name type="common">Fruit fly</name>
    <dbReference type="NCBI Taxonomy" id="7227"/>
    <lineage>
        <taxon>Eukaryota</taxon>
        <taxon>Metazoa</taxon>
        <taxon>Ecdysozoa</taxon>
        <taxon>Arthropoda</taxon>
        <taxon>Hexapoda</taxon>
        <taxon>Insecta</taxon>
        <taxon>Pterygota</taxon>
        <taxon>Neoptera</taxon>
        <taxon>Endopterygota</taxon>
        <taxon>Diptera</taxon>
        <taxon>Brachycera</taxon>
        <taxon>Muscomorpha</taxon>
        <taxon>Ephydroidea</taxon>
        <taxon>Drosophilidae</taxon>
        <taxon>Drosophila</taxon>
        <taxon>Sophophora</taxon>
    </lineage>
</organism>
<protein>
    <recommendedName>
        <fullName>Probable phosphorylase b kinase regulatory subunit alpha</fullName>
        <shortName>Phosphorylase kinase subunit alpha</shortName>
    </recommendedName>
</protein>
<accession>Q9W391</accession>
<accession>Q86B60</accession>
<accession>Q95TZ6</accession>
<gene>
    <name type="ORF">CG7766</name>
</gene>
<proteinExistence type="evidence at protein level"/>
<name>KPBA_DROME</name>
<feature type="chain" id="PRO_0000057735" description="Probable phosphorylase b kinase regulatory subunit alpha">
    <location>
        <begin position="1"/>
        <end position="1247"/>
    </location>
</feature>
<feature type="region of interest" description="Calmodulin-binding" evidence="3">
    <location>
        <begin position="853"/>
        <end position="883"/>
    </location>
</feature>
<feature type="region of interest" description="Calmodulin-binding" evidence="3">
    <location>
        <begin position="1052"/>
        <end position="1089"/>
    </location>
</feature>
<feature type="modified residue" description="Phosphoserine" evidence="4">
    <location>
        <position position="1030"/>
    </location>
</feature>
<feature type="modified residue" description="Phosphoserine" evidence="4">
    <location>
        <position position="1033"/>
    </location>
</feature>
<feature type="lipid moiety-binding region" description="S-farnesyl cysteine" evidence="2">
    <location>
        <position position="1244"/>
    </location>
</feature>
<feature type="splice variant" id="VSP_010298" description="In isoform B." evidence="5">
    <original>FADLSRFYIASDNELMIDILKGEINFLKSAWDLLGRPLVTLVLKRIH</original>
    <variation>HIDYEEYYTTRDPDLLASNFTTNLAFLTNNWRHMLGRPTITLMATHYM</variation>
    <location>
        <begin position="524"/>
        <end position="570"/>
    </location>
</feature>
<sequence>MRSRSNSGVRLDYYQRIVHRLILAHQEPVTGLFPASNVNSHAWIRDNVYCILAVWGLSMAYKKIADQDEDRAKCYELEQSCVKLMRGLLMAMMNQKDKVEKFKMTQSPYDSLHAKYSSKNGLPVVDDNEWGHLQIDAVSLYLLILAQMTASGLQIVFSLDEVSFIQNLVFYIESAYSIPDYGIWERGDKTNHGEPELNASSIGMAKAALEAMNELDLFGARGGPASVIHVLADEAHKCQAVLQSMLPRESNSKELDSGLLCVIGFPAFAVDDAQLIHNTKDAILSRLQGKYGCKRFLRDGYRTPKEDPSRLYYERWELRMFENIECEWPLFYCYLILFHAFQSDKRAVEEYASRLEKIMVRSEDGILLVPESYAVPQDLVGFEYQKPGSQVREVVGRCPFLWGQSLFILGRLLQEGFLAVGELDPLNRRLGAQKKPDVVVQVVIIAEDNEIRDKLAEHDLHVQTIAEVAPIEVQPARVLSHLYTYLGRNRKLGLSGRKSRDVGILSTSKLYSLKDRIFAFTPQFADLSRFYIASDNELMIDILKGEINFLKSAWDLLGRPLVTLVLKRIHLDQDKIPLAMIQTMRKLKSGYINGTRVMLGSLKDFLNTSAITDLSFLGSTEDGYPDRLHPDVQTYLDEHLLRSFSNRSTMNLRGGQLRPRTLRRRMSCKGAIKKTRSINVDSDNLGMEGPSPLTERRLSSIVPPPWLQANKQSHVSVFATTPEEGPTSSPLSLGNDLIRENIYPVDPHHSRSAIDRRSEFVRQQEMPKILIQRHRAETNFADTEVEELIAMLRETENLEEQGDILQYLVDTQGLDFNTAGLGFKNKSEENATPNANNAGMLEEGRVVTVRDLLKGLYEKACQQKLWGLVRHTAGMLGKRVEDLAKAVTDLLVRQKQVTVGMPPNNEHTITAPLPEVELRQLIHDAYGDDESTAMLTQELMVYLAMFIRTEPQLFHEMLRLRVGLIIQVMAKELSRTLNCDGEAASEHLLNLSPFEMKNLLYHILSGKEFAVSSVARGNLSIVSCKSSRVSKKSQIGLGDPEGEDALIATIDDRQGQWLRRRRLDGALNRVPRDFYSRVWTVLEKCQGLAIEGRVLQQSLTQEMTPGELKFALEVETALNQIPQPEYRQLVVEALMVLTLVTEHNMVPSLGGVIYVEHLVHKANQLFLEDQRKVQGDATLCCAKIKDGKEQQQAASGMLLCGGAAYICQHLYDSAPSGSYGTMTYMSRAVALVLDCVPKHGEMECAIS</sequence>
<keyword id="KW-0025">Alternative splicing</keyword>
<keyword id="KW-0112">Calmodulin-binding</keyword>
<keyword id="KW-0119">Carbohydrate metabolism</keyword>
<keyword id="KW-1003">Cell membrane</keyword>
<keyword id="KW-0321">Glycogen metabolism</keyword>
<keyword id="KW-0449">Lipoprotein</keyword>
<keyword id="KW-0472">Membrane</keyword>
<keyword id="KW-0597">Phosphoprotein</keyword>
<keyword id="KW-0636">Prenylation</keyword>
<keyword id="KW-1185">Reference proteome</keyword>
<evidence type="ECO:0000250" key="1"/>
<evidence type="ECO:0000250" key="2">
    <source>
        <dbReference type="UniProtKB" id="P18688"/>
    </source>
</evidence>
<evidence type="ECO:0000255" key="3"/>
<evidence type="ECO:0000269" key="4">
    <source>
    </source>
</evidence>
<evidence type="ECO:0000305" key="5"/>
<comment type="function">
    <text evidence="1">Phosphorylase b kinase catalyzes the phosphorylation of serine in certain substrates, including troponin I. The alpha chain may bind calmodulin (By similarity).</text>
</comment>
<comment type="pathway">
    <text>Glycan biosynthesis; glycogen metabolism.</text>
</comment>
<comment type="subcellular location">
    <subcellularLocation>
        <location evidence="5">Cell membrane</location>
        <topology evidence="5">Lipid-anchor</topology>
        <orientation evidence="5">Cytoplasmic side</orientation>
    </subcellularLocation>
</comment>
<comment type="alternative products">
    <event type="alternative splicing"/>
    <isoform>
        <id>Q9W391-1</id>
        <name>A</name>
        <sequence type="displayed"/>
    </isoform>
    <isoform>
        <id>Q9W391-2</id>
        <name>B</name>
        <sequence type="described" ref="VSP_010298"/>
    </isoform>
</comment>
<comment type="PTM">
    <text evidence="2">Although the final Cys may be farnesylated, the terminal tripeptide is probably not removed, and the C-terminus is not methylated.</text>
</comment>
<comment type="similarity">
    <text evidence="5">Belongs to the phosphorylase b kinase regulatory chain family.</text>
</comment>